<accession>Q9SW07</accession>
<accession>Q8LCT0</accession>
<evidence type="ECO:0000250" key="1"/>
<evidence type="ECO:0000255" key="2"/>
<evidence type="ECO:0000256" key="3">
    <source>
        <dbReference type="SAM" id="MobiDB-lite"/>
    </source>
</evidence>
<evidence type="ECO:0000269" key="4">
    <source>
    </source>
</evidence>
<evidence type="ECO:0000269" key="5">
    <source ref="8"/>
</evidence>
<evidence type="ECO:0000305" key="6"/>
<comment type="function">
    <text evidence="4 5">Probable subunit of an amino acid transporter involved in the regulation of the amino acid metabolism. Stimulates amino acid export by activating nonselective amino acid facilitators.</text>
</comment>
<comment type="subcellular location">
    <subcellularLocation>
        <location evidence="5">Membrane</location>
        <topology evidence="5">Single-pass membrane protein</topology>
    </subcellularLocation>
</comment>
<comment type="tissue specificity">
    <text evidence="4 5">Expressed in the vascular tissues.</text>
</comment>
<comment type="domain">
    <text evidence="1">The VIMAG motif is necessary for the function of the protein.</text>
</comment>
<comment type="miscellaneous">
    <text>Overexpression of GLUTAMINE DUMPER 2 leads to free amino acid levels accumulation and plant size decrease (PubMed:20018597, Ref.8).</text>
</comment>
<comment type="similarity">
    <text evidence="6">Belongs to the GLUTAMINE DUMPER 1 (TC 9.B.60) family.</text>
</comment>
<keyword id="KW-0029">Amino-acid transport</keyword>
<keyword id="KW-0472">Membrane</keyword>
<keyword id="KW-1185">Reference proteome</keyword>
<keyword id="KW-0812">Transmembrane</keyword>
<keyword id="KW-1133">Transmembrane helix</keyword>
<keyword id="KW-0813">Transport</keyword>
<protein>
    <recommendedName>
        <fullName>Protein GLUTAMINE DUMPER 2</fullName>
    </recommendedName>
</protein>
<organism>
    <name type="scientific">Arabidopsis thaliana</name>
    <name type="common">Mouse-ear cress</name>
    <dbReference type="NCBI Taxonomy" id="3702"/>
    <lineage>
        <taxon>Eukaryota</taxon>
        <taxon>Viridiplantae</taxon>
        <taxon>Streptophyta</taxon>
        <taxon>Embryophyta</taxon>
        <taxon>Tracheophyta</taxon>
        <taxon>Spermatophyta</taxon>
        <taxon>Magnoliopsida</taxon>
        <taxon>eudicotyledons</taxon>
        <taxon>Gunneridae</taxon>
        <taxon>Pentapetalae</taxon>
        <taxon>rosids</taxon>
        <taxon>malvids</taxon>
        <taxon>Brassicales</taxon>
        <taxon>Brassicaceae</taxon>
        <taxon>Camelineae</taxon>
        <taxon>Arabidopsis</taxon>
    </lineage>
</organism>
<sequence>MQTMEGRQYNYQDSINASSSMVVPHSPWHSPVPYLFGGLAAMLALICVALLILACSYWRLSGSAERDLEAGDDAKPDNDTNKTKHTEMPEKFLVIMAGDVRPTYLATPATRSEQSCTCGDHNEEEGRRG</sequence>
<dbReference type="EMBL" id="AL049480">
    <property type="protein sequence ID" value="CAB39597.1"/>
    <property type="molecule type" value="Genomic_DNA"/>
</dbReference>
<dbReference type="EMBL" id="AL161563">
    <property type="protein sequence ID" value="CAB81386.1"/>
    <property type="molecule type" value="Genomic_DNA"/>
</dbReference>
<dbReference type="EMBL" id="CP002687">
    <property type="protein sequence ID" value="AEE85110.1"/>
    <property type="molecule type" value="Genomic_DNA"/>
</dbReference>
<dbReference type="EMBL" id="BX828970">
    <property type="status" value="NOT_ANNOTATED_CDS"/>
    <property type="molecule type" value="mRNA"/>
</dbReference>
<dbReference type="EMBL" id="AY086421">
    <property type="protein sequence ID" value="AAM63423.1"/>
    <property type="molecule type" value="mRNA"/>
</dbReference>
<dbReference type="PIR" id="T04230">
    <property type="entry name" value="T04230"/>
</dbReference>
<dbReference type="RefSeq" id="NP_567728.1">
    <property type="nucleotide sequence ID" value="NM_118708.2"/>
</dbReference>
<dbReference type="SMR" id="Q9SW07"/>
<dbReference type="BioGRID" id="13968">
    <property type="interactions" value="43"/>
</dbReference>
<dbReference type="FunCoup" id="Q9SW07">
    <property type="interactions" value="30"/>
</dbReference>
<dbReference type="IntAct" id="Q9SW07">
    <property type="interactions" value="6"/>
</dbReference>
<dbReference type="MINT" id="Q9SW07"/>
<dbReference type="STRING" id="3702.Q9SW07"/>
<dbReference type="GlyGen" id="Q9SW07">
    <property type="glycosylation" value="1 site"/>
</dbReference>
<dbReference type="PaxDb" id="3702-AT4G25760.1"/>
<dbReference type="EnsemblPlants" id="AT4G25760.1">
    <property type="protein sequence ID" value="AT4G25760.1"/>
    <property type="gene ID" value="AT4G25760"/>
</dbReference>
<dbReference type="GeneID" id="828681"/>
<dbReference type="Gramene" id="AT4G25760.1">
    <property type="protein sequence ID" value="AT4G25760.1"/>
    <property type="gene ID" value="AT4G25760"/>
</dbReference>
<dbReference type="KEGG" id="ath:AT4G25760"/>
<dbReference type="Araport" id="AT4G25760"/>
<dbReference type="TAIR" id="AT4G25760">
    <property type="gene designation" value="GDU2"/>
</dbReference>
<dbReference type="eggNOG" id="ENOG502S1CH">
    <property type="taxonomic scope" value="Eukaryota"/>
</dbReference>
<dbReference type="HOGENOM" id="CLU_112624_2_2_1"/>
<dbReference type="InParanoid" id="Q9SW07"/>
<dbReference type="OMA" id="CTCGDHN"/>
<dbReference type="PRO" id="PR:Q9SW07"/>
<dbReference type="Proteomes" id="UP000006548">
    <property type="component" value="Chromosome 4"/>
</dbReference>
<dbReference type="ExpressionAtlas" id="Q9SW07">
    <property type="expression patterns" value="baseline and differential"/>
</dbReference>
<dbReference type="GO" id="GO:0016020">
    <property type="term" value="C:membrane"/>
    <property type="evidence" value="ECO:0007669"/>
    <property type="project" value="UniProtKB-SubCell"/>
</dbReference>
<dbReference type="GO" id="GO:0006865">
    <property type="term" value="P:amino acid transport"/>
    <property type="evidence" value="ECO:0007669"/>
    <property type="project" value="UniProtKB-KW"/>
</dbReference>
<dbReference type="GO" id="GO:0080143">
    <property type="term" value="P:regulation of amino acid export"/>
    <property type="evidence" value="ECO:0000315"/>
    <property type="project" value="TAIR"/>
</dbReference>
<dbReference type="InterPro" id="IPR040359">
    <property type="entry name" value="GDU"/>
</dbReference>
<dbReference type="PANTHER" id="PTHR33228:SF77">
    <property type="entry name" value="PROTEIN GLUTAMINE DUMPER 2"/>
    <property type="match status" value="1"/>
</dbReference>
<dbReference type="PANTHER" id="PTHR33228">
    <property type="entry name" value="PROTEIN GLUTAMINE DUMPER 4-RELATED"/>
    <property type="match status" value="1"/>
</dbReference>
<proteinExistence type="evidence at transcript level"/>
<gene>
    <name type="primary">GDU2</name>
    <name type="ordered locus">At4g25760</name>
    <name type="ORF">F14M19.40</name>
</gene>
<reference key="1">
    <citation type="journal article" date="1999" name="Nature">
        <title>Sequence and analysis of chromosome 4 of the plant Arabidopsis thaliana.</title>
        <authorList>
            <person name="Mayer K.F.X."/>
            <person name="Schueller C."/>
            <person name="Wambutt R."/>
            <person name="Murphy G."/>
            <person name="Volckaert G."/>
            <person name="Pohl T."/>
            <person name="Duesterhoeft A."/>
            <person name="Stiekema W."/>
            <person name="Entian K.-D."/>
            <person name="Terryn N."/>
            <person name="Harris B."/>
            <person name="Ansorge W."/>
            <person name="Brandt P."/>
            <person name="Grivell L.A."/>
            <person name="Rieger M."/>
            <person name="Weichselgartner M."/>
            <person name="de Simone V."/>
            <person name="Obermaier B."/>
            <person name="Mache R."/>
            <person name="Mueller M."/>
            <person name="Kreis M."/>
            <person name="Delseny M."/>
            <person name="Puigdomenech P."/>
            <person name="Watson M."/>
            <person name="Schmidtheini T."/>
            <person name="Reichert B."/>
            <person name="Portetelle D."/>
            <person name="Perez-Alonso M."/>
            <person name="Boutry M."/>
            <person name="Bancroft I."/>
            <person name="Vos P."/>
            <person name="Hoheisel J."/>
            <person name="Zimmermann W."/>
            <person name="Wedler H."/>
            <person name="Ridley P."/>
            <person name="Langham S.-A."/>
            <person name="McCullagh B."/>
            <person name="Bilham L."/>
            <person name="Robben J."/>
            <person name="van der Schueren J."/>
            <person name="Grymonprez B."/>
            <person name="Chuang Y.-J."/>
            <person name="Vandenbussche F."/>
            <person name="Braeken M."/>
            <person name="Weltjens I."/>
            <person name="Voet M."/>
            <person name="Bastiaens I."/>
            <person name="Aert R."/>
            <person name="Defoor E."/>
            <person name="Weitzenegger T."/>
            <person name="Bothe G."/>
            <person name="Ramsperger U."/>
            <person name="Hilbert H."/>
            <person name="Braun M."/>
            <person name="Holzer E."/>
            <person name="Brandt A."/>
            <person name="Peters S."/>
            <person name="van Staveren M."/>
            <person name="Dirkse W."/>
            <person name="Mooijman P."/>
            <person name="Klein Lankhorst R."/>
            <person name="Rose M."/>
            <person name="Hauf J."/>
            <person name="Koetter P."/>
            <person name="Berneiser S."/>
            <person name="Hempel S."/>
            <person name="Feldpausch M."/>
            <person name="Lamberth S."/>
            <person name="Van den Daele H."/>
            <person name="De Keyser A."/>
            <person name="Buysshaert C."/>
            <person name="Gielen J."/>
            <person name="Villarroel R."/>
            <person name="De Clercq R."/>
            <person name="van Montagu M."/>
            <person name="Rogers J."/>
            <person name="Cronin A."/>
            <person name="Quail M.A."/>
            <person name="Bray-Allen S."/>
            <person name="Clark L."/>
            <person name="Doggett J."/>
            <person name="Hall S."/>
            <person name="Kay M."/>
            <person name="Lennard N."/>
            <person name="McLay K."/>
            <person name="Mayes R."/>
            <person name="Pettett A."/>
            <person name="Rajandream M.A."/>
            <person name="Lyne M."/>
            <person name="Benes V."/>
            <person name="Rechmann S."/>
            <person name="Borkova D."/>
            <person name="Bloecker H."/>
            <person name="Scharfe M."/>
            <person name="Grimm M."/>
            <person name="Loehnert T.-H."/>
            <person name="Dose S."/>
            <person name="de Haan M."/>
            <person name="Maarse A.C."/>
            <person name="Schaefer M."/>
            <person name="Mueller-Auer S."/>
            <person name="Gabel C."/>
            <person name="Fuchs M."/>
            <person name="Fartmann B."/>
            <person name="Granderath K."/>
            <person name="Dauner D."/>
            <person name="Herzl A."/>
            <person name="Neumann S."/>
            <person name="Argiriou A."/>
            <person name="Vitale D."/>
            <person name="Liguori R."/>
            <person name="Piravandi E."/>
            <person name="Massenet O."/>
            <person name="Quigley F."/>
            <person name="Clabauld G."/>
            <person name="Muendlein A."/>
            <person name="Felber R."/>
            <person name="Schnabl S."/>
            <person name="Hiller R."/>
            <person name="Schmidt W."/>
            <person name="Lecharny A."/>
            <person name="Aubourg S."/>
            <person name="Chefdor F."/>
            <person name="Cooke R."/>
            <person name="Berger C."/>
            <person name="Monfort A."/>
            <person name="Casacuberta E."/>
            <person name="Gibbons T."/>
            <person name="Weber N."/>
            <person name="Vandenbol M."/>
            <person name="Bargues M."/>
            <person name="Terol J."/>
            <person name="Torres A."/>
            <person name="Perez-Perez A."/>
            <person name="Purnelle B."/>
            <person name="Bent E."/>
            <person name="Johnson S."/>
            <person name="Tacon D."/>
            <person name="Jesse T."/>
            <person name="Heijnen L."/>
            <person name="Schwarz S."/>
            <person name="Scholler P."/>
            <person name="Heber S."/>
            <person name="Francs P."/>
            <person name="Bielke C."/>
            <person name="Frishman D."/>
            <person name="Haase D."/>
            <person name="Lemcke K."/>
            <person name="Mewes H.-W."/>
            <person name="Stocker S."/>
            <person name="Zaccaria P."/>
            <person name="Bevan M."/>
            <person name="Wilson R.K."/>
            <person name="de la Bastide M."/>
            <person name="Habermann K."/>
            <person name="Parnell L."/>
            <person name="Dedhia N."/>
            <person name="Gnoj L."/>
            <person name="Schutz K."/>
            <person name="Huang E."/>
            <person name="Spiegel L."/>
            <person name="Sekhon M."/>
            <person name="Murray J."/>
            <person name="Sheet P."/>
            <person name="Cordes M."/>
            <person name="Abu-Threideh J."/>
            <person name="Stoneking T."/>
            <person name="Kalicki J."/>
            <person name="Graves T."/>
            <person name="Harmon G."/>
            <person name="Edwards J."/>
            <person name="Latreille P."/>
            <person name="Courtney L."/>
            <person name="Cloud J."/>
            <person name="Abbott A."/>
            <person name="Scott K."/>
            <person name="Johnson D."/>
            <person name="Minx P."/>
            <person name="Bentley D."/>
            <person name="Fulton B."/>
            <person name="Miller N."/>
            <person name="Greco T."/>
            <person name="Kemp K."/>
            <person name="Kramer J."/>
            <person name="Fulton L."/>
            <person name="Mardis E."/>
            <person name="Dante M."/>
            <person name="Pepin K."/>
            <person name="Hillier L.W."/>
            <person name="Nelson J."/>
            <person name="Spieth J."/>
            <person name="Ryan E."/>
            <person name="Andrews S."/>
            <person name="Geisel C."/>
            <person name="Layman D."/>
            <person name="Du H."/>
            <person name="Ali J."/>
            <person name="Berghoff A."/>
            <person name="Jones K."/>
            <person name="Drone K."/>
            <person name="Cotton M."/>
            <person name="Joshu C."/>
            <person name="Antonoiu B."/>
            <person name="Zidanic M."/>
            <person name="Strong C."/>
            <person name="Sun H."/>
            <person name="Lamar B."/>
            <person name="Yordan C."/>
            <person name="Ma P."/>
            <person name="Zhong J."/>
            <person name="Preston R."/>
            <person name="Vil D."/>
            <person name="Shekher M."/>
            <person name="Matero A."/>
            <person name="Shah R."/>
            <person name="Swaby I.K."/>
            <person name="O'Shaughnessy A."/>
            <person name="Rodriguez M."/>
            <person name="Hoffman J."/>
            <person name="Till S."/>
            <person name="Granat S."/>
            <person name="Shohdy N."/>
            <person name="Hasegawa A."/>
            <person name="Hameed A."/>
            <person name="Lodhi M."/>
            <person name="Johnson A."/>
            <person name="Chen E."/>
            <person name="Marra M.A."/>
            <person name="Martienssen R."/>
            <person name="McCombie W.R."/>
        </authorList>
    </citation>
    <scope>NUCLEOTIDE SEQUENCE [LARGE SCALE GENOMIC DNA]</scope>
    <source>
        <strain>cv. Columbia</strain>
    </source>
</reference>
<reference key="2">
    <citation type="journal article" date="2017" name="Plant J.">
        <title>Araport11: a complete reannotation of the Arabidopsis thaliana reference genome.</title>
        <authorList>
            <person name="Cheng C.Y."/>
            <person name="Krishnakumar V."/>
            <person name="Chan A.P."/>
            <person name="Thibaud-Nissen F."/>
            <person name="Schobel S."/>
            <person name="Town C.D."/>
        </authorList>
    </citation>
    <scope>GENOME REANNOTATION</scope>
    <source>
        <strain>cv. Columbia</strain>
    </source>
</reference>
<reference key="3">
    <citation type="journal article" date="2004" name="Genome Res.">
        <title>Whole genome sequence comparisons and 'full-length' cDNA sequences: a combined approach to evaluate and improve Arabidopsis genome annotation.</title>
        <authorList>
            <person name="Castelli V."/>
            <person name="Aury J.-M."/>
            <person name="Jaillon O."/>
            <person name="Wincker P."/>
            <person name="Clepet C."/>
            <person name="Menard M."/>
            <person name="Cruaud C."/>
            <person name="Quetier F."/>
            <person name="Scarpelli C."/>
            <person name="Schaechter V."/>
            <person name="Temple G."/>
            <person name="Caboche M."/>
            <person name="Weissenbach J."/>
            <person name="Salanoubat M."/>
        </authorList>
    </citation>
    <scope>NUCLEOTIDE SEQUENCE [LARGE SCALE MRNA]</scope>
    <source>
        <strain>cv. Columbia</strain>
    </source>
</reference>
<reference key="4">
    <citation type="submission" date="2002-03" db="EMBL/GenBank/DDBJ databases">
        <title>Full-length cDNA from Arabidopsis thaliana.</title>
        <authorList>
            <person name="Brover V.V."/>
            <person name="Troukhan M.E."/>
            <person name="Alexandrov N.A."/>
            <person name="Lu Y.-P."/>
            <person name="Flavell R.B."/>
            <person name="Feldmann K.A."/>
        </authorList>
    </citation>
    <scope>NUCLEOTIDE SEQUENCE [LARGE SCALE MRNA]</scope>
</reference>
<reference key="5">
    <citation type="journal article" date="2004" name="Plant Cell">
        <title>Overexpression of GLUTAMINE DUMPER1 leads to hypersecretion of glutamine from hydathodes of Arabidopsis leaves.</title>
        <authorList>
            <person name="Pilot G."/>
            <person name="Stransky H."/>
            <person name="Bushey D.F."/>
            <person name="Pratelli R."/>
            <person name="Ludewig U."/>
            <person name="Wingate V.P."/>
            <person name="Frommer W.B."/>
        </authorList>
    </citation>
    <scope>GENE FAMILY</scope>
</reference>
<reference key="6">
    <citation type="journal article" date="2006" name="FEBS Lett.">
        <title>The plant-specific VIMAG domain of Glutamine Dumper1 is necessary for the function of the protein in Arabidopsis.</title>
        <authorList>
            <person name="Pratelli R."/>
            <person name="Pilot G."/>
        </authorList>
    </citation>
    <scope>GENE FAMILY</scope>
</reference>
<reference key="7">
    <citation type="journal article" date="2007" name="FEBS Lett.">
        <authorList>
            <person name="Pratelli R."/>
            <person name="Pilot G."/>
        </authorList>
    </citation>
    <scope>ERRATUM OF PUBMED:17157837</scope>
</reference>
<reference key="8">
    <citation type="book" date="2008" name="Proceedings of the 19th international conference on Arabidopsis research">
        <title>The over-expression of GDU-like genes leads to modification in amino acid content and transport.</title>
        <authorList>
            <person name="Pratelli R."/>
            <person name="Frommer W.B."/>
            <person name="Pilot G."/>
        </authorList>
    </citation>
    <scope>FUNCTION</scope>
    <scope>TISSUE SPECIFICITY</scope>
    <scope>SUBCELLULAR LOCATION</scope>
</reference>
<reference key="9">
    <citation type="journal article" date="2010" name="Plant Physiol.">
        <title>Stimulation of nonselective amino acid export by glutamine dumper proteins.</title>
        <authorList>
            <person name="Pratelli R."/>
            <person name="Voll L.M."/>
            <person name="Horst R.J."/>
            <person name="Frommer W.B."/>
            <person name="Pilot G."/>
        </authorList>
    </citation>
    <scope>FUNCTION</scope>
    <scope>TISSUE SPECIFICITY</scope>
</reference>
<feature type="chain" id="PRO_0000419940" description="Protein GLUTAMINE DUMPER 2">
    <location>
        <begin position="1"/>
        <end position="129"/>
    </location>
</feature>
<feature type="topological domain" description="Extracellular" evidence="2">
    <location>
        <begin position="1"/>
        <end position="34"/>
    </location>
</feature>
<feature type="transmembrane region" description="Helical" evidence="2">
    <location>
        <begin position="35"/>
        <end position="55"/>
    </location>
</feature>
<feature type="topological domain" description="Cytoplasmic" evidence="2">
    <location>
        <begin position="56"/>
        <end position="129"/>
    </location>
</feature>
<feature type="region of interest" description="Disordered" evidence="3">
    <location>
        <begin position="66"/>
        <end position="89"/>
    </location>
</feature>
<feature type="region of interest" description="Disordered" evidence="3">
    <location>
        <begin position="106"/>
        <end position="129"/>
    </location>
</feature>
<feature type="short sequence motif" description="VIMAG">
    <location>
        <begin position="94"/>
        <end position="98"/>
    </location>
</feature>
<feature type="compositionally biased region" description="Basic and acidic residues" evidence="3">
    <location>
        <begin position="120"/>
        <end position="129"/>
    </location>
</feature>
<feature type="sequence conflict" description="In Ref. 4; AAM63423." evidence="6" ref="4">
    <original>V</original>
    <variation>I</variation>
    <location>
        <position position="100"/>
    </location>
</feature>
<name>GDU2_ARATH</name>